<comment type="function">
    <text evidence="1">Required for replication-independent chromatin assembly and for the periodic repression of histone gene transcription during the cell cycle.</text>
</comment>
<comment type="subcellular location">
    <subcellularLocation>
        <location evidence="1">Nucleus</location>
    </subcellularLocation>
</comment>
<comment type="similarity">
    <text evidence="4">Belongs to the WD repeat HIR1 family.</text>
</comment>
<protein>
    <recommendedName>
        <fullName>Protein HIR1</fullName>
    </recommendedName>
</protein>
<organism>
    <name type="scientific">Candida albicans (strain SC5314 / ATCC MYA-2876)</name>
    <name type="common">Yeast</name>
    <dbReference type="NCBI Taxonomy" id="237561"/>
    <lineage>
        <taxon>Eukaryota</taxon>
        <taxon>Fungi</taxon>
        <taxon>Dikarya</taxon>
        <taxon>Ascomycota</taxon>
        <taxon>Saccharomycotina</taxon>
        <taxon>Pichiomycetes</taxon>
        <taxon>Debaryomycetaceae</taxon>
        <taxon>Candida/Lodderomyces clade</taxon>
        <taxon>Candida</taxon>
    </lineage>
</organism>
<sequence length="907" mass="102369">MQILKIPWFGHKTENKTVECYAVTINKDGTRLASGGLDGNVKIWDLTTINVFYKMADQPHKSKKDSTSTKLEESLPDKSLRRPLCSMSRHNGVVTSLKFSPDGRWLASGSDDKICLIWEKDNTQIAKSFGTDEHDLEHWTVRKRLVAHDNDIQDICWSPDGNLLVTVGLDRSVIIWNALTFEKIKRYDIHQSMVKGIVFDPANKFFATASDDRTVRIFRYYKKLNEYNNYEFQMEHVVVDPFKKSPLTSYFRRMSWSPDGQHIAVPNATNGPVPSVAIINRGNWGSDISLIGHEAPVEVCSFSPTLFQIADTPANEEIKFQTVVATGGQDRTLAIWSTCNSRPIVVCSDIVDSSITDICWSPDGETLYFSCLDGSITGVKFGARELGQPVKEDLIDQQLNRYGADRESTILPESVEQLQLEEQSKDSRAISIRRMMPIQEAKPEQTPPISTPASAAIDIERLRKQTVTMTKSGKKRVAPLLVSTSAAPKNVLQKPLEKKRRTKSSSKISQAAYLLPKMGVQTTVHGIKKKAESMSNDTEVEENNDNDDIGENVMANTNSVSDAALKRQRNRRKRKLMELKYPSSFKYISNLPEGLFNNHTLQNIEINKIYKAHSKHKDISAEISSSTAVEIDEDLVFSVVFRVFDHMRKENEVLGQTSGRIRTTIEVRNGKPWDDDISDRDFDDATKVIVTEEGNDKREYCLFFPFRVQHVLPIILNDVLKYYVLCSFHGSVQIISADTGSYRCPTFELGESVVTMRHSQGYMLVLTSSGLFYSWDLKAMKVTMTGISIAAILNNYEIGGKIVVSPIVRGLEINPQDGSPLVLLDMTNDIYGYSIDLQCWVKTVDSWYYGVGADKDLDVVLTGLVKKSKMSYEEDKVTEKIFTYKFDSSNDLEDAMRKRGQELLDLI</sequence>
<name>HIR1_CANAL</name>
<reference key="1">
    <citation type="journal article" date="2004" name="Proc. Natl. Acad. Sci. U.S.A.">
        <title>The diploid genome sequence of Candida albicans.</title>
        <authorList>
            <person name="Jones T."/>
            <person name="Federspiel N.A."/>
            <person name="Chibana H."/>
            <person name="Dungan J."/>
            <person name="Kalman S."/>
            <person name="Magee B.B."/>
            <person name="Newport G."/>
            <person name="Thorstenson Y.R."/>
            <person name="Agabian N."/>
            <person name="Magee P.T."/>
            <person name="Davis R.W."/>
            <person name="Scherer S."/>
        </authorList>
    </citation>
    <scope>NUCLEOTIDE SEQUENCE [LARGE SCALE GENOMIC DNA]</scope>
    <source>
        <strain>SC5314 / ATCC MYA-2876</strain>
    </source>
</reference>
<reference key="2">
    <citation type="journal article" date="2007" name="Genome Biol.">
        <title>Assembly of the Candida albicans genome into sixteen supercontigs aligned on the eight chromosomes.</title>
        <authorList>
            <person name="van het Hoog M."/>
            <person name="Rast T.J."/>
            <person name="Martchenko M."/>
            <person name="Grindle S."/>
            <person name="Dignard D."/>
            <person name="Hogues H."/>
            <person name="Cuomo C."/>
            <person name="Berriman M."/>
            <person name="Scherer S."/>
            <person name="Magee B.B."/>
            <person name="Whiteway M."/>
            <person name="Chibana H."/>
            <person name="Nantel A."/>
            <person name="Magee P.T."/>
        </authorList>
    </citation>
    <scope>GENOME REANNOTATION</scope>
    <source>
        <strain>SC5314 / ATCC MYA-2876</strain>
    </source>
</reference>
<reference key="3">
    <citation type="journal article" date="2013" name="Genome Biol.">
        <title>Assembly of a phased diploid Candida albicans genome facilitates allele-specific measurements and provides a simple model for repeat and indel structure.</title>
        <authorList>
            <person name="Muzzey D."/>
            <person name="Schwartz K."/>
            <person name="Weissman J.S."/>
            <person name="Sherlock G."/>
        </authorList>
    </citation>
    <scope>NUCLEOTIDE SEQUENCE [LARGE SCALE GENOMIC DNA]</scope>
    <scope>GENOME REANNOTATION</scope>
    <source>
        <strain>SC5314 / ATCC MYA-2876</strain>
    </source>
</reference>
<gene>
    <name type="primary">HIR1</name>
    <name type="ordered locus">CAALFM_C200330CA</name>
    <name type="ORF">CaO19.2099</name>
    <name type="ORF">CaO19.9647</name>
</gene>
<evidence type="ECO:0000250" key="1"/>
<evidence type="ECO:0000255" key="2"/>
<evidence type="ECO:0000256" key="3">
    <source>
        <dbReference type="SAM" id="MobiDB-lite"/>
    </source>
</evidence>
<evidence type="ECO:0000305" key="4"/>
<keyword id="KW-0156">Chromatin regulator</keyword>
<keyword id="KW-0539">Nucleus</keyword>
<keyword id="KW-1185">Reference proteome</keyword>
<keyword id="KW-0677">Repeat</keyword>
<keyword id="KW-0678">Repressor</keyword>
<keyword id="KW-0804">Transcription</keyword>
<keyword id="KW-0805">Transcription regulation</keyword>
<keyword id="KW-0853">WD repeat</keyword>
<feature type="chain" id="PRO_0000286405" description="Protein HIR1">
    <location>
        <begin position="1"/>
        <end position="907"/>
    </location>
</feature>
<feature type="repeat" description="WD 1" evidence="2">
    <location>
        <begin position="15"/>
        <end position="54"/>
    </location>
</feature>
<feature type="repeat" description="WD 2" evidence="2">
    <location>
        <begin position="89"/>
        <end position="128"/>
    </location>
</feature>
<feature type="repeat" description="WD 3" evidence="2">
    <location>
        <begin position="147"/>
        <end position="186"/>
    </location>
</feature>
<feature type="repeat" description="WD 4" evidence="2">
    <location>
        <begin position="189"/>
        <end position="228"/>
    </location>
</feature>
<feature type="repeat" description="WD 5" evidence="2">
    <location>
        <begin position="292"/>
        <end position="346"/>
    </location>
</feature>
<feature type="repeat" description="WD 6" evidence="2">
    <location>
        <begin position="350"/>
        <end position="391"/>
    </location>
</feature>
<feature type="region of interest" description="Disordered" evidence="3">
    <location>
        <begin position="532"/>
        <end position="552"/>
    </location>
</feature>
<feature type="compositionally biased region" description="Acidic residues" evidence="3">
    <location>
        <begin position="538"/>
        <end position="550"/>
    </location>
</feature>
<dbReference type="EMBL" id="CP017624">
    <property type="protein sequence ID" value="AOW27087.1"/>
    <property type="molecule type" value="Genomic_DNA"/>
</dbReference>
<dbReference type="RefSeq" id="XP_019330737.1">
    <property type="nucleotide sequence ID" value="XM_019475192.1"/>
</dbReference>
<dbReference type="SMR" id="Q5ACW8"/>
<dbReference type="FunCoup" id="Q5ACW8">
    <property type="interactions" value="206"/>
</dbReference>
<dbReference type="STRING" id="237561.Q5ACW8"/>
<dbReference type="EnsemblFungi" id="C2_00330C_A-T">
    <property type="protein sequence ID" value="C2_00330C_A-T-p1"/>
    <property type="gene ID" value="C2_00330C_A"/>
</dbReference>
<dbReference type="GeneID" id="3638796"/>
<dbReference type="KEGG" id="cal:CAALFM_C200330CA"/>
<dbReference type="CGD" id="CAL0000197832">
    <property type="gene designation" value="HIR1"/>
</dbReference>
<dbReference type="VEuPathDB" id="FungiDB:C2_00330C_A"/>
<dbReference type="eggNOG" id="KOG0973">
    <property type="taxonomic scope" value="Eukaryota"/>
</dbReference>
<dbReference type="HOGENOM" id="CLU_004372_3_0_1"/>
<dbReference type="InParanoid" id="Q5ACW8"/>
<dbReference type="OrthoDB" id="1741719at2759"/>
<dbReference type="PHI-base" id="PHI:123529"/>
<dbReference type="PRO" id="PR:Q5ACW8"/>
<dbReference type="Proteomes" id="UP000000559">
    <property type="component" value="Chromosome 2"/>
</dbReference>
<dbReference type="GO" id="GO:0000785">
    <property type="term" value="C:chromatin"/>
    <property type="evidence" value="ECO:0000318"/>
    <property type="project" value="GO_Central"/>
</dbReference>
<dbReference type="GO" id="GO:0000775">
    <property type="term" value="C:chromosome, centromeric region"/>
    <property type="evidence" value="ECO:0007669"/>
    <property type="project" value="EnsemblFungi"/>
</dbReference>
<dbReference type="GO" id="GO:0000417">
    <property type="term" value="C:HIR complex"/>
    <property type="evidence" value="ECO:0000315"/>
    <property type="project" value="CGD"/>
</dbReference>
<dbReference type="GO" id="GO:0005634">
    <property type="term" value="C:nucleus"/>
    <property type="evidence" value="ECO:0007669"/>
    <property type="project" value="UniProtKB-SubCell"/>
</dbReference>
<dbReference type="GO" id="GO:0003677">
    <property type="term" value="F:DNA binding"/>
    <property type="evidence" value="ECO:0007669"/>
    <property type="project" value="EnsemblFungi"/>
</dbReference>
<dbReference type="GO" id="GO:0042802">
    <property type="term" value="F:identical protein binding"/>
    <property type="evidence" value="ECO:0007669"/>
    <property type="project" value="EnsemblFungi"/>
</dbReference>
<dbReference type="GO" id="GO:0031491">
    <property type="term" value="F:nucleosome binding"/>
    <property type="evidence" value="ECO:0007669"/>
    <property type="project" value="EnsemblFungi"/>
</dbReference>
<dbReference type="GO" id="GO:0003714">
    <property type="term" value="F:transcription corepressor activity"/>
    <property type="evidence" value="ECO:0007669"/>
    <property type="project" value="EnsemblFungi"/>
</dbReference>
<dbReference type="GO" id="GO:0006338">
    <property type="term" value="P:chromatin remodeling"/>
    <property type="evidence" value="ECO:0000318"/>
    <property type="project" value="GO_Central"/>
</dbReference>
<dbReference type="GO" id="GO:0007059">
    <property type="term" value="P:chromosome segregation"/>
    <property type="evidence" value="ECO:0000315"/>
    <property type="project" value="CACAO"/>
</dbReference>
<dbReference type="GO" id="GO:0030448">
    <property type="term" value="P:hyphal growth"/>
    <property type="evidence" value="ECO:0000315"/>
    <property type="project" value="CGD"/>
</dbReference>
<dbReference type="GO" id="GO:0000070">
    <property type="term" value="P:mitotic sister chromatid segregation"/>
    <property type="evidence" value="ECO:0000315"/>
    <property type="project" value="CGD"/>
</dbReference>
<dbReference type="GO" id="GO:1905268">
    <property type="term" value="P:negative regulation of chromatin organization"/>
    <property type="evidence" value="ECO:0007669"/>
    <property type="project" value="EnsemblFungi"/>
</dbReference>
<dbReference type="GO" id="GO:0000122">
    <property type="term" value="P:negative regulation of transcription by RNA polymerase II"/>
    <property type="evidence" value="ECO:0007669"/>
    <property type="project" value="EnsemblFungi"/>
</dbReference>
<dbReference type="GO" id="GO:0016480">
    <property type="term" value="P:negative regulation of transcription by RNA polymerase III"/>
    <property type="evidence" value="ECO:0007669"/>
    <property type="project" value="EnsemblFungi"/>
</dbReference>
<dbReference type="GO" id="GO:0006334">
    <property type="term" value="P:nucleosome assembly"/>
    <property type="evidence" value="ECO:0007669"/>
    <property type="project" value="EnsemblFungi"/>
</dbReference>
<dbReference type="GO" id="GO:0034728">
    <property type="term" value="P:nucleosome organization"/>
    <property type="evidence" value="ECO:0000315"/>
    <property type="project" value="CGD"/>
</dbReference>
<dbReference type="GO" id="GO:0090033">
    <property type="term" value="P:positive regulation of filamentous growth"/>
    <property type="evidence" value="ECO:0000315"/>
    <property type="project" value="CGD"/>
</dbReference>
<dbReference type="GO" id="GO:0006808">
    <property type="term" value="P:regulation of nitrogen utilization"/>
    <property type="evidence" value="ECO:0000315"/>
    <property type="project" value="CGD"/>
</dbReference>
<dbReference type="GO" id="GO:0006368">
    <property type="term" value="P:transcription elongation by RNA polymerase II"/>
    <property type="evidence" value="ECO:0007669"/>
    <property type="project" value="EnsemblFungi"/>
</dbReference>
<dbReference type="FunFam" id="2.130.10.10:FF:000290">
    <property type="entry name" value="Protein HIR"/>
    <property type="match status" value="1"/>
</dbReference>
<dbReference type="FunFam" id="2.130.10.10:FF:001073">
    <property type="entry name" value="Protein HIR"/>
    <property type="match status" value="1"/>
</dbReference>
<dbReference type="Gene3D" id="2.130.10.10">
    <property type="entry name" value="YVTN repeat-like/Quinoprotein amine dehydrogenase"/>
    <property type="match status" value="2"/>
</dbReference>
<dbReference type="InterPro" id="IPR055410">
    <property type="entry name" value="CAF1B_HIR1_beta-prop"/>
</dbReference>
<dbReference type="InterPro" id="IPR031120">
    <property type="entry name" value="HIR1-like"/>
</dbReference>
<dbReference type="InterPro" id="IPR011494">
    <property type="entry name" value="HIRA-like_C"/>
</dbReference>
<dbReference type="InterPro" id="IPR019015">
    <property type="entry name" value="HIRA_B_motif"/>
</dbReference>
<dbReference type="InterPro" id="IPR015943">
    <property type="entry name" value="WD40/YVTN_repeat-like_dom_sf"/>
</dbReference>
<dbReference type="InterPro" id="IPR019775">
    <property type="entry name" value="WD40_repeat_CS"/>
</dbReference>
<dbReference type="InterPro" id="IPR036322">
    <property type="entry name" value="WD40_repeat_dom_sf"/>
</dbReference>
<dbReference type="InterPro" id="IPR001680">
    <property type="entry name" value="WD40_rpt"/>
</dbReference>
<dbReference type="PANTHER" id="PTHR13831">
    <property type="entry name" value="MEMBER OF THE HIR1 FAMILY OF WD-REPEAT PROTEINS"/>
    <property type="match status" value="1"/>
</dbReference>
<dbReference type="PANTHER" id="PTHR13831:SF0">
    <property type="entry name" value="PROTEIN HIRA"/>
    <property type="match status" value="1"/>
</dbReference>
<dbReference type="Pfam" id="PF24105">
    <property type="entry name" value="Beta-prop_CAF1B_HIR1"/>
    <property type="match status" value="1"/>
</dbReference>
<dbReference type="Pfam" id="PF07569">
    <property type="entry name" value="Hira"/>
    <property type="match status" value="1"/>
</dbReference>
<dbReference type="Pfam" id="PF09453">
    <property type="entry name" value="HIRA_B"/>
    <property type="match status" value="1"/>
</dbReference>
<dbReference type="Pfam" id="PF00400">
    <property type="entry name" value="WD40"/>
    <property type="match status" value="1"/>
</dbReference>
<dbReference type="SMART" id="SM00320">
    <property type="entry name" value="WD40"/>
    <property type="match status" value="6"/>
</dbReference>
<dbReference type="SUPFAM" id="SSF101898">
    <property type="entry name" value="NHL repeat"/>
    <property type="match status" value="1"/>
</dbReference>
<dbReference type="SUPFAM" id="SSF50978">
    <property type="entry name" value="WD40 repeat-like"/>
    <property type="match status" value="1"/>
</dbReference>
<dbReference type="PROSITE" id="PS00678">
    <property type="entry name" value="WD_REPEATS_1"/>
    <property type="match status" value="2"/>
</dbReference>
<dbReference type="PROSITE" id="PS50082">
    <property type="entry name" value="WD_REPEATS_2"/>
    <property type="match status" value="4"/>
</dbReference>
<dbReference type="PROSITE" id="PS50294">
    <property type="entry name" value="WD_REPEATS_REGION"/>
    <property type="match status" value="1"/>
</dbReference>
<accession>Q5ACW8</accession>
<accession>A0A1D8PG32</accession>
<proteinExistence type="inferred from homology"/>